<organism>
    <name type="scientific">Bacillus sp. (strain HIL-Y85/54728)</name>
    <dbReference type="NCBI Taxonomy" id="69002"/>
    <lineage>
        <taxon>Bacteria</taxon>
        <taxon>Bacillati</taxon>
        <taxon>Bacillota</taxon>
        <taxon>Bacilli</taxon>
        <taxon>Bacillales</taxon>
        <taxon>Bacillaceae</taxon>
        <taxon>Bacillus</taxon>
    </lineage>
</organism>
<keyword id="KW-0002">3D-structure</keyword>
<keyword id="KW-0044">Antibiotic</keyword>
<keyword id="KW-0929">Antimicrobial</keyword>
<keyword id="KW-0078">Bacteriocin</keyword>
<keyword id="KW-0208">D-amino acid</keyword>
<keyword id="KW-0425">Lantibiotic</keyword>
<keyword id="KW-0883">Thioether bond</keyword>
<dbReference type="EMBL" id="Z47559">
    <property type="protein sequence ID" value="CAA87640.1"/>
    <property type="molecule type" value="Genomic_DNA"/>
</dbReference>
<dbReference type="EMBL" id="AJ250862">
    <property type="protein sequence ID" value="CAB60258.1"/>
    <property type="molecule type" value="Genomic_DNA"/>
</dbReference>
<dbReference type="PDB" id="1MQX">
    <property type="method" value="NMR"/>
    <property type="chains" value="A=49-67"/>
</dbReference>
<dbReference type="PDB" id="1MQY">
    <property type="method" value="NMR"/>
    <property type="chains" value="A=49-67"/>
</dbReference>
<dbReference type="PDB" id="1MQZ">
    <property type="method" value="NMR"/>
    <property type="chains" value="A=49-67"/>
</dbReference>
<dbReference type="PDB" id="1QOW">
    <property type="method" value="X-ray"/>
    <property type="resolution" value="1.06 A"/>
    <property type="chains" value="A/B/C/D/E/F=49-67"/>
</dbReference>
<dbReference type="PDBsum" id="1MQX"/>
<dbReference type="PDBsum" id="1MQY"/>
<dbReference type="PDBsum" id="1MQZ"/>
<dbReference type="PDBsum" id="1QOW"/>
<dbReference type="SMR" id="P43683"/>
<dbReference type="DrugBank" id="DB02688">
    <property type="generic name" value="2,3-Didehydroalanine"/>
</dbReference>
<dbReference type="DrugBank" id="DB01968">
    <property type="generic name" value="2-Thioethenamine"/>
</dbReference>
<dbReference type="DrugBank" id="DB04454">
    <property type="generic name" value="Alpha-Aminobutyric Acid"/>
</dbReference>
<dbReference type="EvolutionaryTrace" id="P43683"/>
<dbReference type="GO" id="GO:0005102">
    <property type="term" value="F:signaling receptor binding"/>
    <property type="evidence" value="ECO:0007669"/>
    <property type="project" value="UniProtKB-KW"/>
</dbReference>
<dbReference type="GO" id="GO:0042742">
    <property type="term" value="P:defense response to bacterium"/>
    <property type="evidence" value="ECO:0007669"/>
    <property type="project" value="UniProtKB-KW"/>
</dbReference>
<dbReference type="GO" id="GO:0031640">
    <property type="term" value="P:killing of cells of another organism"/>
    <property type="evidence" value="ECO:0007669"/>
    <property type="project" value="UniProtKB-KW"/>
</dbReference>
<dbReference type="InterPro" id="IPR027635">
    <property type="entry name" value="Lantibiotic2_lead_pep_dom"/>
</dbReference>
<dbReference type="NCBIfam" id="TIGR03898">
    <property type="entry name" value="lanti_MRSA_kill"/>
    <property type="match status" value="1"/>
</dbReference>
<dbReference type="NCBIfam" id="NF000539">
    <property type="entry name" value="plantaricin"/>
    <property type="match status" value="1"/>
</dbReference>
<reference key="1">
    <citation type="journal article" date="1995" name="FEMS Microbiol. Lett.">
        <title>Cloning, sequencing and production of the lantibiotic mersacidin.</title>
        <authorList>
            <person name="Bierbaum G."/>
            <person name="Broetz H."/>
            <person name="Koller K.-P."/>
            <person name="Sahl H.-G."/>
        </authorList>
    </citation>
    <scope>NUCLEOTIDE SEQUENCE [GENOMIC DNA]</scope>
</reference>
<reference key="2">
    <citation type="journal article" date="2000" name="Appl. Environ. Microbiol.">
        <title>Biosynthesis of the lantibiotic mersacidin: organization of a type B lantibiotic gene cluster.</title>
        <authorList>
            <person name="Altena K."/>
            <person name="Guder A."/>
            <person name="Cramer C."/>
            <person name="Bierbaum G."/>
        </authorList>
    </citation>
    <scope>NUCLEOTIDE SEQUENCE [GENOMIC DNA]</scope>
</reference>
<reference key="3">
    <citation type="journal article" date="1997" name="Eur. J. Biochem.">
        <title>The lantibiotic mersacidin inhibits peptidoglycan biosynthesis at the level of transglycosylation.</title>
        <authorList>
            <person name="Broetz H."/>
            <person name="Bierbaum G."/>
            <person name="Reynolds P.E."/>
            <person name="Sahl H.-G."/>
        </authorList>
    </citation>
    <scope>CHARACTERIZATION</scope>
</reference>
<reference key="4">
    <citation type="journal article" date="1997" name="Eur. J. Biochem.">
        <title>Constitution and solution conformation of the antibiotic mersacidin determined by NMR and molecular dynamics.</title>
        <authorList>
            <person name="Prasch T."/>
            <person name="Naumann T."/>
            <person name="Markert R.L.M."/>
            <person name="Sattler M."/>
            <person name="Schubert W."/>
            <person name="Schaal S."/>
            <person name="Bauch M."/>
            <person name="Kogler H."/>
            <person name="Gresinger C."/>
        </authorList>
    </citation>
    <scope>STRUCTURE BY NMR</scope>
    <scope>DEHYDRATION AT SER-64</scope>
    <scope>LANTHIONINE CROSS-LINKS</scope>
</reference>
<reference key="5">
    <citation type="journal article" date="2000" name="Acta Crystallogr. D">
        <title>Ab initio structure determination of the lantibiotic mersacidin.</title>
        <authorList>
            <person name="Schneider T.R."/>
            <person name="Karcher J."/>
            <person name="Pohl E."/>
            <person name="Lubini P."/>
            <person name="Sheldrick G.M."/>
        </authorList>
    </citation>
    <scope>X-RAY CRYSTALLOGRAPHY (1.06 ANGSTROMS)</scope>
</reference>
<gene>
    <name type="primary">mrsA</name>
</gene>
<evidence type="ECO:0000256" key="1">
    <source>
        <dbReference type="SAM" id="MobiDB-lite"/>
    </source>
</evidence>
<evidence type="ECO:0000269" key="2">
    <source>
    </source>
</evidence>
<evidence type="ECO:0000305" key="3"/>
<evidence type="ECO:0007829" key="4">
    <source>
        <dbReference type="PDB" id="1MQY"/>
    </source>
</evidence>
<evidence type="ECO:0007829" key="5">
    <source>
        <dbReference type="PDB" id="1MQZ"/>
    </source>
</evidence>
<protein>
    <recommendedName>
        <fullName>Lantibiotic mersacidin</fullName>
    </recommendedName>
</protein>
<accession>P43683</accession>
<comment type="function">
    <text>Kills a number of Gram-positive bacteria. Acts at the level of cell wall biosynthesis by interfering with bacterial peptidoglycan biosynthesis. Specifically inhibits the conversion of the lipid II intermediate into polymeric nascent glycan strands by transglycosylation. May interact with the peptidoglycan precursor rather than with the enzyme.</text>
</comment>
<comment type="PTM">
    <text>Maturation of lantibiotics involves the enzymatic conversion of Thr, and Ser into dehydrated AA and the formation of thioether bonds with cysteine. The carboxy-terminal beta-methyllanthionine undergoes decarboxylation. This is followed by membrane translocation and cleavage of the modified precursor.</text>
</comment>
<comment type="similarity">
    <text evidence="3">Belongs to the type B lantibiotic family.</text>
</comment>
<proteinExistence type="evidence at protein level"/>
<feature type="propeptide" id="PRO_0000017150">
    <location>
        <begin position="1"/>
        <end position="48"/>
    </location>
</feature>
<feature type="peptide" id="PRO_0000017151" description="Lantibiotic mersacidin">
    <location>
        <begin position="49"/>
        <end position="68"/>
    </location>
</feature>
<feature type="region of interest" description="Disordered" evidence="1">
    <location>
        <begin position="1"/>
        <end position="28"/>
    </location>
</feature>
<feature type="modified residue" description="2,3-didehydroalanine (Ser)" evidence="2">
    <location>
        <position position="64"/>
    </location>
</feature>
<feature type="cross-link" description="Beta-methyllanthionine (Cys-Thr)" evidence="2">
    <location>
        <begin position="49"/>
        <end position="50"/>
    </location>
</feature>
<feature type="cross-link" description="Beta-methyllanthionine (Thr-Cys)" evidence="2">
    <location>
        <begin position="52"/>
        <end position="60"/>
    </location>
</feature>
<feature type="cross-link" description="Beta-methyllanthionine (Thr-Cys)" evidence="2">
    <location>
        <begin position="61"/>
        <end position="66"/>
    </location>
</feature>
<feature type="cross-link" description="S-(2-aminovinyl)-3-methyl-D-cysteine (Thr-Cys)" evidence="2">
    <location>
        <begin position="63"/>
        <end position="68"/>
    </location>
</feature>
<feature type="strand" evidence="4">
    <location>
        <begin position="51"/>
        <end position="53"/>
    </location>
</feature>
<feature type="strand" evidence="5">
    <location>
        <begin position="56"/>
        <end position="58"/>
    </location>
</feature>
<name>MRSA_BACSY</name>
<sequence>MSQEAIIRSWKDPFSRENSTQNPAGNPFSELKEAQMDKLVGAGDMEAACTFTLPGGGGVCTLTSECIC</sequence>